<dbReference type="EMBL" id="AM180088">
    <property type="protein sequence ID" value="CAJ53197.1"/>
    <property type="molecule type" value="Genomic_DNA"/>
</dbReference>
<dbReference type="RefSeq" id="WP_011572304.1">
    <property type="nucleotide sequence ID" value="NC_008212.1"/>
</dbReference>
<dbReference type="SMR" id="Q18FQ8"/>
<dbReference type="STRING" id="362976.HQ_3097A"/>
<dbReference type="GeneID" id="4194683"/>
<dbReference type="KEGG" id="hwa:HQ_3097A"/>
<dbReference type="eggNOG" id="arCOG03055">
    <property type="taxonomic scope" value="Archaea"/>
</dbReference>
<dbReference type="HOGENOM" id="CLU_007894_5_0_2"/>
<dbReference type="Proteomes" id="UP000001975">
    <property type="component" value="Chromosome"/>
</dbReference>
<dbReference type="GO" id="GO:0005886">
    <property type="term" value="C:plasma membrane"/>
    <property type="evidence" value="ECO:0007669"/>
    <property type="project" value="UniProtKB-SubCell"/>
</dbReference>
<dbReference type="GO" id="GO:0065002">
    <property type="term" value="P:intracellular protein transmembrane transport"/>
    <property type="evidence" value="ECO:0007669"/>
    <property type="project" value="UniProtKB-UniRule"/>
</dbReference>
<dbReference type="GO" id="GO:0006605">
    <property type="term" value="P:protein targeting"/>
    <property type="evidence" value="ECO:0007669"/>
    <property type="project" value="UniProtKB-UniRule"/>
</dbReference>
<dbReference type="Gene3D" id="1.20.1640.10">
    <property type="entry name" value="Multidrug efflux transporter AcrB transmembrane domain"/>
    <property type="match status" value="1"/>
</dbReference>
<dbReference type="HAMAP" id="MF_01463_A">
    <property type="entry name" value="SecD_A"/>
    <property type="match status" value="1"/>
</dbReference>
<dbReference type="InterPro" id="IPR022813">
    <property type="entry name" value="SecD/SecF_arch_bac"/>
</dbReference>
<dbReference type="InterPro" id="IPR024912">
    <property type="entry name" value="SecD_arc"/>
</dbReference>
<dbReference type="InterPro" id="IPR048634">
    <property type="entry name" value="SecD_SecF_C"/>
</dbReference>
<dbReference type="NCBIfam" id="NF006215">
    <property type="entry name" value="PRK08343.1-1"/>
    <property type="match status" value="1"/>
</dbReference>
<dbReference type="PANTHER" id="PTHR30081:SF1">
    <property type="entry name" value="PROTEIN TRANSLOCASE SUBUNIT SECD"/>
    <property type="match status" value="1"/>
</dbReference>
<dbReference type="PANTHER" id="PTHR30081">
    <property type="entry name" value="PROTEIN-EXPORT MEMBRANE PROTEIN SEC"/>
    <property type="match status" value="1"/>
</dbReference>
<dbReference type="Pfam" id="PF02355">
    <property type="entry name" value="SecD_SecF_C"/>
    <property type="match status" value="1"/>
</dbReference>
<dbReference type="SUPFAM" id="SSF82866">
    <property type="entry name" value="Multidrug efflux transporter AcrB transmembrane domain"/>
    <property type="match status" value="1"/>
</dbReference>
<gene>
    <name evidence="1" type="primary">secD</name>
    <name type="ordered locus">HQ_3097A</name>
</gene>
<reference key="1">
    <citation type="journal article" date="2006" name="BMC Genomics">
        <title>The genome of the square archaeon Haloquadratum walsbyi: life at the limits of water activity.</title>
        <authorList>
            <person name="Bolhuis H."/>
            <person name="Palm P."/>
            <person name="Wende A."/>
            <person name="Falb M."/>
            <person name="Rampp M."/>
            <person name="Rodriguez-Valera F."/>
            <person name="Pfeiffer F."/>
            <person name="Oesterhelt D."/>
        </authorList>
    </citation>
    <scope>NUCLEOTIDE SEQUENCE [LARGE SCALE GENOMIC DNA]</scope>
    <source>
        <strain>DSM 16790 / HBSQ001</strain>
    </source>
</reference>
<name>SECD_HALWD</name>
<sequence length="520" mass="54774">MIDFRENWRIILLVIVVIVSLFALVSPTLASGPDSNSAVVQQSSQTNLQYGLELAGGTRVRAPLVGVTAEEVEFEPANAREVEQRIATAIDGAGPADVIARPVTETTGTVEVTVEGVSTTELQSILESTGYTASTVRTGVTETTRQEVVRILENKINEAGLSGGTVQEVTTAGGGHFILIEVPNEDAASVRSLVSERGTVVVQAHYPQDDIYTQQTVLQQDNFQSIGSAQEGQSGGAYVPVTVRESAANEFQQATVDTTLARPGGTRCTYSRDQNSTEPCLLLVVNGEVTNSFGMAPRLADSLRGGSWAQDPVFQLQTANVSEAQEVAINLRAGALPAKLDLTGDDGGTTSFISPSQGENFRTDSLLAGLVAVFAVSGVVFLRYRDARVALPMIVTALSEVLILLGFAAGIGYPLDLSVIAGFITVIGTGVDDLVIIADEVLAEGGVSSRRVFQSRFRRAFWVIGAAAATTIIAMSPLAILSLGDLQGFAIFTILGVLVGVLITRPAYGDILRALTTGNL</sequence>
<protein>
    <recommendedName>
        <fullName evidence="1">Protein-export membrane protein SecD</fullName>
    </recommendedName>
</protein>
<comment type="function">
    <text evidence="1">Involved in protein export.</text>
</comment>
<comment type="subunit">
    <text evidence="1">Part of the protein translocation apparatus. Forms a complex with SecF.</text>
</comment>
<comment type="subcellular location">
    <subcellularLocation>
        <location evidence="1">Cell membrane</location>
        <topology evidence="1">Multi-pass membrane protein</topology>
    </subcellularLocation>
</comment>
<comment type="similarity">
    <text evidence="1">Belongs to the SecD/SecF family. SecD subfamily.</text>
</comment>
<organism>
    <name type="scientific">Haloquadratum walsbyi (strain DSM 16790 / HBSQ001)</name>
    <dbReference type="NCBI Taxonomy" id="362976"/>
    <lineage>
        <taxon>Archaea</taxon>
        <taxon>Methanobacteriati</taxon>
        <taxon>Methanobacteriota</taxon>
        <taxon>Stenosarchaea group</taxon>
        <taxon>Halobacteria</taxon>
        <taxon>Halobacteriales</taxon>
        <taxon>Haloferacaceae</taxon>
        <taxon>Haloquadratum</taxon>
    </lineage>
</organism>
<accession>Q18FQ8</accession>
<feature type="chain" id="PRO_0000412686" description="Protein-export membrane protein SecD">
    <location>
        <begin position="1"/>
        <end position="520"/>
    </location>
</feature>
<feature type="transmembrane region" description="Helical" evidence="1">
    <location>
        <begin position="10"/>
        <end position="30"/>
    </location>
</feature>
<feature type="transmembrane region" description="Helical" evidence="1">
    <location>
        <begin position="364"/>
        <end position="384"/>
    </location>
</feature>
<feature type="transmembrane region" description="Helical" evidence="1">
    <location>
        <begin position="391"/>
        <end position="411"/>
    </location>
</feature>
<feature type="transmembrane region" description="Helical" evidence="1">
    <location>
        <begin position="417"/>
        <end position="437"/>
    </location>
</feature>
<feature type="transmembrane region" description="Helical" evidence="1">
    <location>
        <begin position="461"/>
        <end position="481"/>
    </location>
</feature>
<feature type="transmembrane region" description="Helical" evidence="1">
    <location>
        <begin position="483"/>
        <end position="503"/>
    </location>
</feature>
<evidence type="ECO:0000255" key="1">
    <source>
        <dbReference type="HAMAP-Rule" id="MF_01463"/>
    </source>
</evidence>
<keyword id="KW-1003">Cell membrane</keyword>
<keyword id="KW-0472">Membrane</keyword>
<keyword id="KW-0653">Protein transport</keyword>
<keyword id="KW-1185">Reference proteome</keyword>
<keyword id="KW-0811">Translocation</keyword>
<keyword id="KW-0812">Transmembrane</keyword>
<keyword id="KW-1133">Transmembrane helix</keyword>
<keyword id="KW-0813">Transport</keyword>
<proteinExistence type="inferred from homology"/>